<accession>Q62470</accession>
<accession>Q08441</accession>
<accession>Q08442</accession>
<accession>Q5SWA8</accession>
<accession>Q5SWB9</accession>
<accession>Q6P6I1</accession>
<evidence type="ECO:0000250" key="1"/>
<evidence type="ECO:0000250" key="2">
    <source>
        <dbReference type="UniProtKB" id="P26006"/>
    </source>
</evidence>
<evidence type="ECO:0000255" key="3"/>
<evidence type="ECO:0000255" key="4">
    <source>
        <dbReference type="PROSITE-ProRule" id="PRU00803"/>
    </source>
</evidence>
<evidence type="ECO:0000256" key="5">
    <source>
        <dbReference type="SAM" id="MobiDB-lite"/>
    </source>
</evidence>
<evidence type="ECO:0000269" key="6">
    <source>
    </source>
</evidence>
<evidence type="ECO:0000269" key="7">
    <source>
    </source>
</evidence>
<evidence type="ECO:0000269" key="8">
    <source>
    </source>
</evidence>
<evidence type="ECO:0000305" key="9"/>
<organism>
    <name type="scientific">Mus musculus</name>
    <name type="common">Mouse</name>
    <dbReference type="NCBI Taxonomy" id="10090"/>
    <lineage>
        <taxon>Eukaryota</taxon>
        <taxon>Metazoa</taxon>
        <taxon>Chordata</taxon>
        <taxon>Craniata</taxon>
        <taxon>Vertebrata</taxon>
        <taxon>Euteleostomi</taxon>
        <taxon>Mammalia</taxon>
        <taxon>Eutheria</taxon>
        <taxon>Euarchontoglires</taxon>
        <taxon>Glires</taxon>
        <taxon>Rodentia</taxon>
        <taxon>Myomorpha</taxon>
        <taxon>Muroidea</taxon>
        <taxon>Muridae</taxon>
        <taxon>Murinae</taxon>
        <taxon>Mus</taxon>
        <taxon>Mus</taxon>
    </lineage>
</organism>
<protein>
    <recommendedName>
        <fullName>Integrin alpha-3</fullName>
    </recommendedName>
    <alternativeName>
        <fullName>CD49 antigen-like family member C</fullName>
    </alternativeName>
    <alternativeName>
        <fullName>Galactoprotein B3</fullName>
        <shortName>GAPB3</shortName>
    </alternativeName>
    <alternativeName>
        <fullName>VLA-3 subunit alpha</fullName>
    </alternativeName>
    <cdAntigenName>CD49c</cdAntigenName>
    <component>
        <recommendedName>
            <fullName>Integrin alpha-3 heavy chain</fullName>
        </recommendedName>
    </component>
    <component>
        <recommendedName>
            <fullName>Integrin alpha-3 light chain</fullName>
        </recommendedName>
    </component>
</protein>
<name>ITA3_MOUSE</name>
<proteinExistence type="evidence at protein level"/>
<comment type="function">
    <text evidence="2">Integrin alpha-3/beta-1 is a receptor for fibronectin, laminin, collagen, epiligrin, thrombospondin and CSPG4. Integrin alpha-3/beta-1 provides a docking site for FAP (seprase) at invadopodia plasma membranes in a collagen-dependent manner and hence may participate in the adhesion, formation of invadopodia and matrix degradation processes, promoting cell invasion. Alpha-3/beta-1 may mediate with LGALS3 the stimulation by CSPG4 of endothelial cells migration.</text>
</comment>
<comment type="subunit">
    <text evidence="2">Heterodimer of an alpha and a beta subunit. The alpha subunit is composed of a heavy and a light chain linked by a disulfide bond. Alpha-3 associates with beta-1. Interacts with HPS5. Interacts with FAP (seprase); the interaction occurs at the cell surface of invadopodia membrane in a collagen-dependent manner.</text>
</comment>
<comment type="interaction">
    <interactant intactId="EBI-8398907">
        <id>Q62470</id>
    </interactant>
    <interactant intactId="EBI-8369654">
        <id>O35566</id>
        <label>Cd151</label>
    </interactant>
    <organismsDiffer>false</organismsDiffer>
    <experiments>2</experiments>
</comment>
<comment type="interaction">
    <interactant intactId="EBI-8398907">
        <id>Q62470</id>
    </interactant>
    <interactant intactId="EBI-8539266">
        <id>P28828</id>
        <label>Ptprm</label>
    </interactant>
    <organismsDiffer>false</organismsDiffer>
    <experiments>3</experiments>
</comment>
<comment type="subcellular location">
    <subcellularLocation>
        <location>Cell membrane</location>
        <topology>Single-pass type I membrane protein</topology>
    </subcellularLocation>
    <subcellularLocation>
        <location evidence="1">Cell membrane</location>
        <topology evidence="1">Lipid-anchor</topology>
    </subcellularLocation>
    <subcellularLocation>
        <location evidence="2">Cell projection</location>
        <location evidence="2">Invadopodium membrane</location>
        <topology evidence="3">Single-pass type I membrane protein</topology>
    </subcellularLocation>
    <subcellularLocation>
        <location evidence="2">Cell projection</location>
        <location evidence="2">Filopodium membrane</location>
        <topology evidence="3">Single-pass type I membrane protein</topology>
    </subcellularLocation>
    <text evidence="2">Enriched preferentially at invadopodia, cell membrane protrusions that correspond to sites of cell invasion, in a collagen-dependent manner.</text>
</comment>
<comment type="alternative products">
    <event type="alternative splicing"/>
    <isoform>
        <id>Q62470-1</id>
        <name>1</name>
        <name>Alpha-3A</name>
        <sequence type="displayed"/>
    </isoform>
    <isoform>
        <id>Q62470-2</id>
        <name>2</name>
        <name>Alpha-3B</name>
        <sequence type="described" ref="VSP_002722"/>
    </isoform>
    <isoform>
        <id>Q62470-3</id>
        <name>3</name>
        <sequence type="described" ref="VSP_041797"/>
    </isoform>
</comment>
<comment type="tissue specificity">
    <text evidence="7">Isoform 1 and isoform 2 are expressed in heart and brain. Only isoform 1 is detected in lung.</text>
</comment>
<comment type="similarity">
    <text evidence="9">Belongs to the integrin alpha chain family.</text>
</comment>
<dbReference type="EMBL" id="D13867">
    <property type="protein sequence ID" value="BAA02980.1"/>
    <property type="molecule type" value="mRNA"/>
</dbReference>
<dbReference type="EMBL" id="AL606480">
    <property type="status" value="NOT_ANNOTATED_CDS"/>
    <property type="molecule type" value="Genomic_DNA"/>
</dbReference>
<dbReference type="EMBL" id="BC053031">
    <property type="protein sequence ID" value="AAH53031.1"/>
    <property type="molecule type" value="mRNA"/>
</dbReference>
<dbReference type="EMBL" id="BC062205">
    <property type="protein sequence ID" value="AAH62205.1"/>
    <property type="molecule type" value="mRNA"/>
</dbReference>
<dbReference type="EMBL" id="S66292">
    <property type="protein sequence ID" value="AAB20356.2"/>
    <property type="molecule type" value="mRNA"/>
</dbReference>
<dbReference type="EMBL" id="S66294">
    <property type="protein sequence ID" value="AAB20357.2"/>
    <property type="molecule type" value="mRNA"/>
</dbReference>
<dbReference type="CCDS" id="CCDS25271.1">
    <molecule id="Q62470-1"/>
</dbReference>
<dbReference type="CCDS" id="CCDS83877.1">
    <molecule id="Q62470-3"/>
</dbReference>
<dbReference type="CCDS" id="CCDS83878.1">
    <molecule id="Q62470-2"/>
</dbReference>
<dbReference type="PIR" id="B41543">
    <property type="entry name" value="B41543"/>
</dbReference>
<dbReference type="PIR" id="I55534">
    <property type="entry name" value="I55534"/>
</dbReference>
<dbReference type="RefSeq" id="NP_001293000.1">
    <molecule id="Q62470-3"/>
    <property type="nucleotide sequence ID" value="NM_001306071.1"/>
</dbReference>
<dbReference type="RefSeq" id="NP_001293091.1">
    <molecule id="Q62470-2"/>
    <property type="nucleotide sequence ID" value="NM_001306162.1"/>
</dbReference>
<dbReference type="RefSeq" id="NP_038593.1">
    <molecule id="Q62470-1"/>
    <property type="nucleotide sequence ID" value="NM_013565.3"/>
</dbReference>
<dbReference type="RefSeq" id="XP_006532373.1">
    <molecule id="Q62470-2"/>
    <property type="nucleotide sequence ID" value="XM_006532310.5"/>
</dbReference>
<dbReference type="RefSeq" id="XP_006532374.1">
    <molecule id="Q62470-1"/>
    <property type="nucleotide sequence ID" value="XM_006532311.5"/>
</dbReference>
<dbReference type="SMR" id="Q62470"/>
<dbReference type="BioGRID" id="200816">
    <property type="interactions" value="6"/>
</dbReference>
<dbReference type="ComplexPortal" id="CPX-3117">
    <property type="entry name" value="Integrin alpha3-beta1 complex"/>
</dbReference>
<dbReference type="CORUM" id="Q62470"/>
<dbReference type="FunCoup" id="Q62470">
    <property type="interactions" value="779"/>
</dbReference>
<dbReference type="IntAct" id="Q62470">
    <property type="interactions" value="6"/>
</dbReference>
<dbReference type="STRING" id="10090.ENSMUSP00000113556"/>
<dbReference type="GlyConnect" id="2423">
    <molecule id="Q62470-2"/>
    <property type="glycosylation" value="6 N-Linked glycans (5 sites)"/>
</dbReference>
<dbReference type="GlyCosmos" id="Q62470">
    <property type="glycosylation" value="13 sites, 6 glycans"/>
</dbReference>
<dbReference type="GlyGen" id="Q62470">
    <property type="glycosylation" value="13 sites, 16 N-linked glycans (11 sites)"/>
</dbReference>
<dbReference type="iPTMnet" id="Q62470"/>
<dbReference type="PhosphoSitePlus" id="Q62470"/>
<dbReference type="SwissPalm" id="Q62470"/>
<dbReference type="jPOST" id="Q62470"/>
<dbReference type="PaxDb" id="10090-ENSMUSP00000001548"/>
<dbReference type="PeptideAtlas" id="Q62470"/>
<dbReference type="ProteomicsDB" id="301682">
    <molecule id="Q62470-1"/>
</dbReference>
<dbReference type="ProteomicsDB" id="301683">
    <molecule id="Q62470-2"/>
</dbReference>
<dbReference type="ProteomicsDB" id="301684">
    <molecule id="Q62470-3"/>
</dbReference>
<dbReference type="Pumba" id="Q62470"/>
<dbReference type="Antibodypedia" id="18000">
    <property type="antibodies" value="1055 antibodies from 45 providers"/>
</dbReference>
<dbReference type="DNASU" id="16400"/>
<dbReference type="Ensembl" id="ENSMUST00000001548.14">
    <molecule id="Q62470-1"/>
    <property type="protein sequence ID" value="ENSMUSP00000001548.8"/>
    <property type="gene ID" value="ENSMUSG00000001507.17"/>
</dbReference>
<dbReference type="Ensembl" id="ENSMUST00000107739.8">
    <molecule id="Q62470-3"/>
    <property type="protein sequence ID" value="ENSMUSP00000103368.2"/>
    <property type="gene ID" value="ENSMUSG00000001507.17"/>
</dbReference>
<dbReference type="Ensembl" id="ENSMUST00000120375.8">
    <molecule id="Q62470-2"/>
    <property type="protein sequence ID" value="ENSMUSP00000113556.2"/>
    <property type="gene ID" value="ENSMUSG00000001507.17"/>
</dbReference>
<dbReference type="GeneID" id="16400"/>
<dbReference type="KEGG" id="mmu:16400"/>
<dbReference type="UCSC" id="uc007kzv.1">
    <molecule id="Q62470-3"/>
    <property type="organism name" value="mouse"/>
</dbReference>
<dbReference type="UCSC" id="uc007kzw.1">
    <molecule id="Q62470-1"/>
    <property type="organism name" value="mouse"/>
</dbReference>
<dbReference type="UCSC" id="uc007kzx.1">
    <molecule id="Q62470-2"/>
    <property type="organism name" value="mouse"/>
</dbReference>
<dbReference type="AGR" id="MGI:96602"/>
<dbReference type="CTD" id="3675"/>
<dbReference type="MGI" id="MGI:96602">
    <property type="gene designation" value="Itga3"/>
</dbReference>
<dbReference type="VEuPathDB" id="HostDB:ENSMUSG00000001507"/>
<dbReference type="eggNOG" id="KOG3637">
    <property type="taxonomic scope" value="Eukaryota"/>
</dbReference>
<dbReference type="GeneTree" id="ENSGT00940000157746"/>
<dbReference type="HOGENOM" id="CLU_004111_1_0_1"/>
<dbReference type="InParanoid" id="Q62470"/>
<dbReference type="OMA" id="PRRNGMQ"/>
<dbReference type="OrthoDB" id="45015at9989"/>
<dbReference type="TreeFam" id="TF105391"/>
<dbReference type="Reactome" id="R-MMU-210991">
    <property type="pathway name" value="Basigin interactions"/>
</dbReference>
<dbReference type="Reactome" id="R-MMU-216083">
    <property type="pathway name" value="Integrin cell surface interactions"/>
</dbReference>
<dbReference type="Reactome" id="R-MMU-3000157">
    <property type="pathway name" value="Laminin interactions"/>
</dbReference>
<dbReference type="Reactome" id="R-MMU-8874081">
    <property type="pathway name" value="MET activates PTK2 signaling"/>
</dbReference>
<dbReference type="BioGRID-ORCS" id="16400">
    <property type="hits" value="2 hits in 78 CRISPR screens"/>
</dbReference>
<dbReference type="ChiTaRS" id="Itga3">
    <property type="organism name" value="mouse"/>
</dbReference>
<dbReference type="PRO" id="PR:Q62470"/>
<dbReference type="Proteomes" id="UP000000589">
    <property type="component" value="Chromosome 11"/>
</dbReference>
<dbReference type="RNAct" id="Q62470">
    <property type="molecule type" value="protein"/>
</dbReference>
<dbReference type="Bgee" id="ENSMUSG00000001507">
    <property type="expression patterns" value="Expressed in undifferentiated genital tubercle and 299 other cell types or tissues"/>
</dbReference>
<dbReference type="ExpressionAtlas" id="Q62470">
    <property type="expression patterns" value="baseline and differential"/>
</dbReference>
<dbReference type="GO" id="GO:0070161">
    <property type="term" value="C:anchoring junction"/>
    <property type="evidence" value="ECO:0007669"/>
    <property type="project" value="UniProtKB-KW"/>
</dbReference>
<dbReference type="GO" id="GO:0016323">
    <property type="term" value="C:basolateral plasma membrane"/>
    <property type="evidence" value="ECO:0000314"/>
    <property type="project" value="MGI"/>
</dbReference>
<dbReference type="GO" id="GO:0060076">
    <property type="term" value="C:excitatory synapse"/>
    <property type="evidence" value="ECO:0000314"/>
    <property type="project" value="MGI"/>
</dbReference>
<dbReference type="GO" id="GO:0009897">
    <property type="term" value="C:external side of plasma membrane"/>
    <property type="evidence" value="ECO:0000314"/>
    <property type="project" value="MGI"/>
</dbReference>
<dbReference type="GO" id="GO:0031527">
    <property type="term" value="C:filopodium membrane"/>
    <property type="evidence" value="ECO:0000250"/>
    <property type="project" value="UniProtKB"/>
</dbReference>
<dbReference type="GO" id="GO:0098978">
    <property type="term" value="C:glutamatergic synapse"/>
    <property type="evidence" value="ECO:0000314"/>
    <property type="project" value="SynGO"/>
</dbReference>
<dbReference type="GO" id="GO:1990812">
    <property type="term" value="C:growth cone filopodium"/>
    <property type="evidence" value="ECO:0007669"/>
    <property type="project" value="Ensembl"/>
</dbReference>
<dbReference type="GO" id="GO:0034667">
    <property type="term" value="C:integrin alpha3-beta1 complex"/>
    <property type="evidence" value="ECO:0007669"/>
    <property type="project" value="Ensembl"/>
</dbReference>
<dbReference type="GO" id="GO:0031594">
    <property type="term" value="C:neuromuscular junction"/>
    <property type="evidence" value="ECO:0000314"/>
    <property type="project" value="SynGO"/>
</dbReference>
<dbReference type="GO" id="GO:0048471">
    <property type="term" value="C:perinuclear region of cytoplasm"/>
    <property type="evidence" value="ECO:0007669"/>
    <property type="project" value="Ensembl"/>
</dbReference>
<dbReference type="GO" id="GO:0005886">
    <property type="term" value="C:plasma membrane"/>
    <property type="evidence" value="ECO:0000314"/>
    <property type="project" value="MGI"/>
</dbReference>
<dbReference type="GO" id="GO:0045211">
    <property type="term" value="C:postsynaptic membrane"/>
    <property type="evidence" value="ECO:0007669"/>
    <property type="project" value="Ensembl"/>
</dbReference>
<dbReference type="GO" id="GO:0048787">
    <property type="term" value="C:presynaptic active zone membrane"/>
    <property type="evidence" value="ECO:0000314"/>
    <property type="project" value="SynGO"/>
</dbReference>
<dbReference type="GO" id="GO:0043235">
    <property type="term" value="C:receptor complex"/>
    <property type="evidence" value="ECO:0000266"/>
    <property type="project" value="MGI"/>
</dbReference>
<dbReference type="GO" id="GO:0045202">
    <property type="term" value="C:synapse"/>
    <property type="evidence" value="ECO:0000314"/>
    <property type="project" value="MGI"/>
</dbReference>
<dbReference type="GO" id="GO:0097060">
    <property type="term" value="C:synaptic membrane"/>
    <property type="evidence" value="ECO:0000314"/>
    <property type="project" value="MGI"/>
</dbReference>
<dbReference type="GO" id="GO:0005518">
    <property type="term" value="F:collagen binding"/>
    <property type="evidence" value="ECO:0007669"/>
    <property type="project" value="Ensembl"/>
</dbReference>
<dbReference type="GO" id="GO:0001968">
    <property type="term" value="F:fibronectin binding"/>
    <property type="evidence" value="ECO:0007669"/>
    <property type="project" value="Ensembl"/>
</dbReference>
<dbReference type="GO" id="GO:0005178">
    <property type="term" value="F:integrin binding"/>
    <property type="evidence" value="ECO:0007669"/>
    <property type="project" value="Ensembl"/>
</dbReference>
<dbReference type="GO" id="GO:0043236">
    <property type="term" value="F:laminin binding"/>
    <property type="evidence" value="ECO:0007669"/>
    <property type="project" value="Ensembl"/>
</dbReference>
<dbReference type="GO" id="GO:0002020">
    <property type="term" value="F:protease binding"/>
    <property type="evidence" value="ECO:0007669"/>
    <property type="project" value="Ensembl"/>
</dbReference>
<dbReference type="GO" id="GO:0019904">
    <property type="term" value="F:protein domain specific binding"/>
    <property type="evidence" value="ECO:0007669"/>
    <property type="project" value="Ensembl"/>
</dbReference>
<dbReference type="GO" id="GO:0046982">
    <property type="term" value="F:protein heterodimerization activity"/>
    <property type="evidence" value="ECO:0000250"/>
    <property type="project" value="UniProtKB"/>
</dbReference>
<dbReference type="GO" id="GO:0097062">
    <property type="term" value="P:dendritic spine maintenance"/>
    <property type="evidence" value="ECO:0000315"/>
    <property type="project" value="MGI"/>
</dbReference>
<dbReference type="GO" id="GO:0035640">
    <property type="term" value="P:exploration behavior"/>
    <property type="evidence" value="ECO:0000316"/>
    <property type="project" value="MGI"/>
</dbReference>
<dbReference type="GO" id="GO:0007507">
    <property type="term" value="P:heart development"/>
    <property type="evidence" value="ECO:0007669"/>
    <property type="project" value="Ensembl"/>
</dbReference>
<dbReference type="GO" id="GO:0007229">
    <property type="term" value="P:integrin-mediated signaling pathway"/>
    <property type="evidence" value="ECO:0007669"/>
    <property type="project" value="UniProtKB-KW"/>
</dbReference>
<dbReference type="GO" id="GO:0030324">
    <property type="term" value="P:lung development"/>
    <property type="evidence" value="ECO:0007669"/>
    <property type="project" value="Ensembl"/>
</dbReference>
<dbReference type="GO" id="GO:0060135">
    <property type="term" value="P:maternal process involved in female pregnancy"/>
    <property type="evidence" value="ECO:0007669"/>
    <property type="project" value="Ensembl"/>
</dbReference>
<dbReference type="GO" id="GO:0007613">
    <property type="term" value="P:memory"/>
    <property type="evidence" value="ECO:0000315"/>
    <property type="project" value="MGI"/>
</dbReference>
<dbReference type="GO" id="GO:0048333">
    <property type="term" value="P:mesodermal cell differentiation"/>
    <property type="evidence" value="ECO:0007669"/>
    <property type="project" value="Ensembl"/>
</dbReference>
<dbReference type="GO" id="GO:0031345">
    <property type="term" value="P:negative regulation of cell projection organization"/>
    <property type="evidence" value="ECO:0007669"/>
    <property type="project" value="Ensembl"/>
</dbReference>
<dbReference type="GO" id="GO:0035024">
    <property type="term" value="P:negative regulation of Rho protein signal transduction"/>
    <property type="evidence" value="ECO:0000316"/>
    <property type="project" value="MGI"/>
</dbReference>
<dbReference type="GO" id="GO:0072006">
    <property type="term" value="P:nephron development"/>
    <property type="evidence" value="ECO:0007669"/>
    <property type="project" value="Ensembl"/>
</dbReference>
<dbReference type="GO" id="GO:0001764">
    <property type="term" value="P:neuron migration"/>
    <property type="evidence" value="ECO:0000315"/>
    <property type="project" value="MGI"/>
</dbReference>
<dbReference type="GO" id="GO:0010811">
    <property type="term" value="P:positive regulation of cell-substrate adhesion"/>
    <property type="evidence" value="ECO:0007669"/>
    <property type="project" value="Ensembl"/>
</dbReference>
<dbReference type="GO" id="GO:0010634">
    <property type="term" value="P:positive regulation of epithelial cell migration"/>
    <property type="evidence" value="ECO:0007669"/>
    <property type="project" value="Ensembl"/>
</dbReference>
<dbReference type="GO" id="GO:0010628">
    <property type="term" value="P:positive regulation of gene expression"/>
    <property type="evidence" value="ECO:0007669"/>
    <property type="project" value="Ensembl"/>
</dbReference>
<dbReference type="GO" id="GO:0010976">
    <property type="term" value="P:positive regulation of neuron projection development"/>
    <property type="evidence" value="ECO:0007669"/>
    <property type="project" value="Ensembl"/>
</dbReference>
<dbReference type="GO" id="GO:1903078">
    <property type="term" value="P:positive regulation of protein localization to plasma membrane"/>
    <property type="evidence" value="ECO:0000250"/>
    <property type="project" value="UniProtKB"/>
</dbReference>
<dbReference type="GO" id="GO:0099173">
    <property type="term" value="P:postsynapse organization"/>
    <property type="evidence" value="ECO:0000314"/>
    <property type="project" value="SynGO"/>
</dbReference>
<dbReference type="GO" id="GO:0030510">
    <property type="term" value="P:regulation of BMP signaling pathway"/>
    <property type="evidence" value="ECO:0007669"/>
    <property type="project" value="Ensembl"/>
</dbReference>
<dbReference type="GO" id="GO:0017015">
    <property type="term" value="P:regulation of transforming growth factor beta receptor signaling pathway"/>
    <property type="evidence" value="ECO:0007669"/>
    <property type="project" value="Ensembl"/>
</dbReference>
<dbReference type="GO" id="GO:0030111">
    <property type="term" value="P:regulation of Wnt signaling pathway"/>
    <property type="evidence" value="ECO:0007669"/>
    <property type="project" value="Ensembl"/>
</dbReference>
<dbReference type="GO" id="GO:0097205">
    <property type="term" value="P:renal filtration"/>
    <property type="evidence" value="ECO:0007669"/>
    <property type="project" value="Ensembl"/>
</dbReference>
<dbReference type="GO" id="GO:0034698">
    <property type="term" value="P:response to gonadotropin"/>
    <property type="evidence" value="ECO:0007669"/>
    <property type="project" value="Ensembl"/>
</dbReference>
<dbReference type="GO" id="GO:0009410">
    <property type="term" value="P:response to xenobiotic stimulus"/>
    <property type="evidence" value="ECO:0007669"/>
    <property type="project" value="Ensembl"/>
</dbReference>
<dbReference type="GO" id="GO:0007266">
    <property type="term" value="P:Rho protein signal transduction"/>
    <property type="evidence" value="ECO:0000316"/>
    <property type="project" value="MGI"/>
</dbReference>
<dbReference type="GO" id="GO:0043588">
    <property type="term" value="P:skin development"/>
    <property type="evidence" value="ECO:0007669"/>
    <property type="project" value="Ensembl"/>
</dbReference>
<dbReference type="GO" id="GO:0099560">
    <property type="term" value="P:synaptic membrane adhesion"/>
    <property type="evidence" value="ECO:0000314"/>
    <property type="project" value="SynGO"/>
</dbReference>
<dbReference type="FunFam" id="2.60.40.1460:FF:000004">
    <property type="entry name" value="integrin alpha-3 isoform X2"/>
    <property type="match status" value="1"/>
</dbReference>
<dbReference type="FunFam" id="2.130.10.130:FF:000007">
    <property type="entry name" value="Integrin subunit alpha 3"/>
    <property type="match status" value="1"/>
</dbReference>
<dbReference type="FunFam" id="2.60.40.1510:FF:000012">
    <property type="entry name" value="Integrin subunit alpha 3"/>
    <property type="match status" value="1"/>
</dbReference>
<dbReference type="FunFam" id="2.60.40.1530:FF:000004">
    <property type="entry name" value="Integrin subunit alpha 3"/>
    <property type="match status" value="1"/>
</dbReference>
<dbReference type="FunFam" id="1.20.5.930:FF:000001">
    <property type="entry name" value="Integrin subunit alpha V"/>
    <property type="match status" value="1"/>
</dbReference>
<dbReference type="Gene3D" id="1.20.5.930">
    <property type="entry name" value="Bicelle-embedded integrin alpha(iib) transmembrane segment"/>
    <property type="match status" value="1"/>
</dbReference>
<dbReference type="Gene3D" id="2.130.10.130">
    <property type="entry name" value="Integrin alpha, N-terminal"/>
    <property type="match status" value="1"/>
</dbReference>
<dbReference type="Gene3D" id="2.60.40.1460">
    <property type="entry name" value="Integrin domains. Chain A, domain 2"/>
    <property type="match status" value="1"/>
</dbReference>
<dbReference type="Gene3D" id="2.60.40.1510">
    <property type="entry name" value="ntegrin, alpha v. Chain A, domain 3"/>
    <property type="match status" value="1"/>
</dbReference>
<dbReference type="Gene3D" id="2.60.40.1530">
    <property type="entry name" value="ntegrin, alpha v. Chain A, domain 4"/>
    <property type="match status" value="1"/>
</dbReference>
<dbReference type="InterPro" id="IPR013517">
    <property type="entry name" value="FG-GAP"/>
</dbReference>
<dbReference type="InterPro" id="IPR013519">
    <property type="entry name" value="Int_alpha_beta-p"/>
</dbReference>
<dbReference type="InterPro" id="IPR000413">
    <property type="entry name" value="Integrin_alpha"/>
</dbReference>
<dbReference type="InterPro" id="IPR018184">
    <property type="entry name" value="Integrin_alpha_C_CS"/>
</dbReference>
<dbReference type="InterPro" id="IPR013649">
    <property type="entry name" value="Integrin_alpha_Ig-like_1"/>
</dbReference>
<dbReference type="InterPro" id="IPR048285">
    <property type="entry name" value="Integrin_alpha_Ig-like_2"/>
</dbReference>
<dbReference type="InterPro" id="IPR048286">
    <property type="entry name" value="Integrin_alpha_Ig-like_3"/>
</dbReference>
<dbReference type="InterPro" id="IPR028994">
    <property type="entry name" value="Integrin_alpha_N"/>
</dbReference>
<dbReference type="InterPro" id="IPR032695">
    <property type="entry name" value="Integrin_dom_sf"/>
</dbReference>
<dbReference type="PANTHER" id="PTHR23220">
    <property type="entry name" value="INTEGRIN ALPHA"/>
    <property type="match status" value="1"/>
</dbReference>
<dbReference type="PANTHER" id="PTHR23220:SF89">
    <property type="entry name" value="INTEGRIN ALPHA-3"/>
    <property type="match status" value="1"/>
</dbReference>
<dbReference type="Pfam" id="PF01839">
    <property type="entry name" value="FG-GAP"/>
    <property type="match status" value="2"/>
</dbReference>
<dbReference type="Pfam" id="PF08441">
    <property type="entry name" value="Integrin_A_Ig_1"/>
    <property type="match status" value="1"/>
</dbReference>
<dbReference type="Pfam" id="PF20805">
    <property type="entry name" value="Integrin_A_Ig_2"/>
    <property type="match status" value="1"/>
</dbReference>
<dbReference type="Pfam" id="PF20806">
    <property type="entry name" value="Integrin_A_Ig_3"/>
    <property type="match status" value="1"/>
</dbReference>
<dbReference type="PRINTS" id="PR01185">
    <property type="entry name" value="INTEGRINA"/>
</dbReference>
<dbReference type="SMART" id="SM00191">
    <property type="entry name" value="Int_alpha"/>
    <property type="match status" value="5"/>
</dbReference>
<dbReference type="SUPFAM" id="SSF69318">
    <property type="entry name" value="Integrin alpha N-terminal domain"/>
    <property type="match status" value="1"/>
</dbReference>
<dbReference type="SUPFAM" id="SSF69179">
    <property type="entry name" value="Integrin domains"/>
    <property type="match status" value="3"/>
</dbReference>
<dbReference type="PROSITE" id="PS51470">
    <property type="entry name" value="FG_GAP"/>
    <property type="match status" value="7"/>
</dbReference>
<dbReference type="PROSITE" id="PS00242">
    <property type="entry name" value="INTEGRIN_ALPHA"/>
    <property type="match status" value="1"/>
</dbReference>
<reference key="1">
    <citation type="journal article" date="1995" name="J. Cell. Biochem.">
        <title>cDNA cloning of mouse VLA-3 alpha subunit.</title>
        <authorList>
            <person name="Takeuchi K."/>
            <person name="Hirano K."/>
            <person name="Tuji T."/>
            <person name="Osawa T."/>
            <person name="Irimura T."/>
        </authorList>
    </citation>
    <scope>NUCLEOTIDE SEQUENCE [MRNA] (ISOFORM 1)</scope>
    <source>
        <strain>BALB/cJ</strain>
    </source>
</reference>
<reference key="2">
    <citation type="journal article" date="2009" name="PLoS Biol.">
        <title>Lineage-specific biology revealed by a finished genome assembly of the mouse.</title>
        <authorList>
            <person name="Church D.M."/>
            <person name="Goodstadt L."/>
            <person name="Hillier L.W."/>
            <person name="Zody M.C."/>
            <person name="Goldstein S."/>
            <person name="She X."/>
            <person name="Bult C.J."/>
            <person name="Agarwala R."/>
            <person name="Cherry J.L."/>
            <person name="DiCuccio M."/>
            <person name="Hlavina W."/>
            <person name="Kapustin Y."/>
            <person name="Meric P."/>
            <person name="Maglott D."/>
            <person name="Birtle Z."/>
            <person name="Marques A.C."/>
            <person name="Graves T."/>
            <person name="Zhou S."/>
            <person name="Teague B."/>
            <person name="Potamousis K."/>
            <person name="Churas C."/>
            <person name="Place M."/>
            <person name="Herschleb J."/>
            <person name="Runnheim R."/>
            <person name="Forrest D."/>
            <person name="Amos-Landgraf J."/>
            <person name="Schwartz D.C."/>
            <person name="Cheng Z."/>
            <person name="Lindblad-Toh K."/>
            <person name="Eichler E.E."/>
            <person name="Ponting C.P."/>
        </authorList>
    </citation>
    <scope>NUCLEOTIDE SEQUENCE [LARGE SCALE GENOMIC DNA]</scope>
    <source>
        <strain>C57BL/6J</strain>
    </source>
</reference>
<reference key="3">
    <citation type="journal article" date="2004" name="Genome Res.">
        <title>The status, quality, and expansion of the NIH full-length cDNA project: the Mammalian Gene Collection (MGC).</title>
        <authorList>
            <consortium name="The MGC Project Team"/>
        </authorList>
    </citation>
    <scope>NUCLEOTIDE SEQUENCE [LARGE SCALE MRNA] (ISOFORM 1)</scope>
    <source>
        <strain>C57BL/6J</strain>
        <strain>FVB/N</strain>
        <tissue>Embryonic brain</tissue>
        <tissue>Mammary tumor</tissue>
    </source>
</reference>
<reference key="4">
    <citation type="journal article" date="1991" name="Proc. Natl. Acad. Sci. U.S.A.">
        <title>Cell type-specific integrin variants with alternative alpha chain cytoplasmic domains.</title>
        <authorList>
            <person name="Tamura R.N."/>
            <person name="Cooper H.M."/>
            <person name="Collo G."/>
            <person name="Quaranta V."/>
        </authorList>
    </citation>
    <scope>NUCLEOTIDE SEQUENCE [MRNA] OF 913-1053 (ISOFORM 1)</scope>
    <scope>PARTIAL NUCLEOTIDE SEQUENCE [MRNA] (ISOFORM 2)</scope>
    <scope>TISSUE SPECIFICITY</scope>
</reference>
<reference key="5">
    <citation type="journal article" date="2004" name="Mol. Biol. Cell">
        <title>NG2 proteoglycan promotes endothelial cell motility and angiogenesis via engagement of galectin-3 and alpha3beta1 integrin.</title>
        <authorList>
            <person name="Fukushi J."/>
            <person name="Makagiansar I.T."/>
            <person name="Stallcup W.B."/>
        </authorList>
    </citation>
    <scope>INTERACTION WITH ITGB1; LGALS3 AND CSPG4</scope>
</reference>
<reference key="6">
    <citation type="journal article" date="2009" name="Mol. Cell. Proteomics">
        <title>The mouse C2C12 myoblast cell surface N-linked glycoproteome: identification, glycosite occupancy, and membrane orientation.</title>
        <authorList>
            <person name="Gundry R.L."/>
            <person name="Raginski K."/>
            <person name="Tarasova Y."/>
            <person name="Tchernyshyov I."/>
            <person name="Bausch-Fluck D."/>
            <person name="Elliott S.T."/>
            <person name="Boheler K.R."/>
            <person name="Van Eyk J.E."/>
            <person name="Wollscheid B."/>
        </authorList>
    </citation>
    <scope>GLYCOSYLATION [LARGE SCALE ANALYSIS] AT ASN-86; ASN-574; ASN-606; ASN-657; ASN-928 AND ASN-937</scope>
    <source>
        <tissue>Myoblast</tissue>
    </source>
</reference>
<reference key="7">
    <citation type="journal article" date="2009" name="Nat. Biotechnol.">
        <title>Mass-spectrometric identification and relative quantification of N-linked cell surface glycoproteins.</title>
        <authorList>
            <person name="Wollscheid B."/>
            <person name="Bausch-Fluck D."/>
            <person name="Henderson C."/>
            <person name="O'Brien R."/>
            <person name="Bibel M."/>
            <person name="Schiess R."/>
            <person name="Aebersold R."/>
            <person name="Watts J.D."/>
        </authorList>
    </citation>
    <scope>GLYCOSYLATION [LARGE SCALE ANALYSIS] AT ASN-86; ASN-512; ASN-574; ASN-657; ASN-937 AND ASN-971</scope>
</reference>
<reference key="8">
    <citation type="journal article" date="2010" name="Cell">
        <title>A tissue-specific atlas of mouse protein phosphorylation and expression.</title>
        <authorList>
            <person name="Huttlin E.L."/>
            <person name="Jedrychowski M.P."/>
            <person name="Elias J.E."/>
            <person name="Goswami T."/>
            <person name="Rad R."/>
            <person name="Beausoleil S.A."/>
            <person name="Villen J."/>
            <person name="Haas W."/>
            <person name="Sowa M.E."/>
            <person name="Gygi S.P."/>
        </authorList>
    </citation>
    <scope>IDENTIFICATION BY MASS SPECTROMETRY [LARGE SCALE ANALYSIS]</scope>
    <source>
        <tissue>Kidney</tissue>
        <tissue>Liver</tissue>
        <tissue>Lung</tissue>
        <tissue>Pancreas</tissue>
        <tissue>Spleen</tissue>
        <tissue>Testis</tissue>
    </source>
</reference>
<feature type="signal peptide" evidence="1">
    <location>
        <begin position="1"/>
        <end position="32"/>
    </location>
</feature>
<feature type="chain" id="PRO_0000016241" description="Integrin alpha-3">
    <location>
        <begin position="33"/>
        <end position="1053"/>
    </location>
</feature>
<feature type="chain" id="PRO_0000016242" description="Integrin alpha-3 heavy chain" evidence="3">
    <location>
        <begin position="33"/>
        <end position="874"/>
    </location>
</feature>
<feature type="chain" id="PRO_0000016243" description="Integrin alpha-3 light chain" evidence="3">
    <location>
        <begin position="878"/>
        <end position="1053"/>
    </location>
</feature>
<feature type="topological domain" description="Extracellular" evidence="3">
    <location>
        <begin position="33"/>
        <end position="993"/>
    </location>
</feature>
<feature type="transmembrane region" description="Helical" evidence="3">
    <location>
        <begin position="994"/>
        <end position="1021"/>
    </location>
</feature>
<feature type="topological domain" description="Cytoplasmic" evidence="3">
    <location>
        <begin position="1022"/>
        <end position="1053"/>
    </location>
</feature>
<feature type="repeat" description="FG-GAP 1" evidence="4">
    <location>
        <begin position="38"/>
        <end position="103"/>
    </location>
</feature>
<feature type="repeat" description="FG-GAP 2" evidence="4">
    <location>
        <begin position="110"/>
        <end position="171"/>
    </location>
</feature>
<feature type="repeat" description="FG-GAP 3" evidence="4">
    <location>
        <begin position="185"/>
        <end position="235"/>
    </location>
</feature>
<feature type="repeat" description="FG-GAP 4" evidence="4">
    <location>
        <begin position="236"/>
        <end position="293"/>
    </location>
</feature>
<feature type="repeat" description="FG-GAP 5" evidence="4">
    <location>
        <begin position="294"/>
        <end position="355"/>
    </location>
</feature>
<feature type="repeat" description="FG-GAP 6" evidence="4">
    <location>
        <begin position="357"/>
        <end position="412"/>
    </location>
</feature>
<feature type="repeat" description="FG-GAP 7" evidence="4">
    <location>
        <begin position="416"/>
        <end position="478"/>
    </location>
</feature>
<feature type="region of interest" description="Disordered" evidence="5">
    <location>
        <begin position="865"/>
        <end position="890"/>
    </location>
</feature>
<feature type="lipid moiety-binding region" description="S-palmitoyl cysteine" evidence="1">
    <location>
        <position position="1018"/>
    </location>
</feature>
<feature type="glycosylation site" description="N-linked (GlcNAc...) asparagine" evidence="6 8">
    <location>
        <position position="86"/>
    </location>
</feature>
<feature type="glycosylation site" description="N-linked (GlcNAc...) asparagine" evidence="3">
    <location>
        <position position="501"/>
    </location>
</feature>
<feature type="glycosylation site" description="N-linked (GlcNAc...) asparagine" evidence="6">
    <location>
        <position position="512"/>
    </location>
</feature>
<feature type="glycosylation site" description="N-linked (GlcNAc...) asparagine" evidence="6 8">
    <location>
        <position position="574"/>
    </location>
</feature>
<feature type="glycosylation site" description="N-linked (GlcNAc...) asparagine" evidence="8">
    <location>
        <position position="606"/>
    </location>
</feature>
<feature type="glycosylation site" description="N-linked (GlcNAc...) asparagine" evidence="6 8">
    <location>
        <position position="657"/>
    </location>
</feature>
<feature type="glycosylation site" description="N-linked (GlcNAc...) asparagine" evidence="3">
    <location>
        <position position="699"/>
    </location>
</feature>
<feature type="glycosylation site" description="N-linked (GlcNAc...) asparagine" evidence="3">
    <location>
        <position position="843"/>
    </location>
</feature>
<feature type="glycosylation site" description="N-linked (GlcNAc...) asparagine" evidence="3">
    <location>
        <position position="859"/>
    </location>
</feature>
<feature type="glycosylation site" description="N-linked (GlcNAc...) asparagine" evidence="3">
    <location>
        <position position="925"/>
    </location>
</feature>
<feature type="glycosylation site" description="N-linked (GlcNAc...) asparagine" evidence="8">
    <location>
        <position position="928"/>
    </location>
</feature>
<feature type="glycosylation site" description="N-linked (GlcNAc...) asparagine" evidence="6 8">
    <location>
        <position position="937"/>
    </location>
</feature>
<feature type="glycosylation site" description="N-linked (GlcNAc...) asparagine" evidence="6">
    <location>
        <position position="971"/>
    </location>
</feature>
<feature type="disulfide bond" evidence="1">
    <location>
        <begin position="94"/>
        <end position="103"/>
    </location>
</feature>
<feature type="disulfide bond" evidence="1">
    <location>
        <begin position="140"/>
        <end position="162"/>
    </location>
</feature>
<feature type="disulfide bond" evidence="1">
    <location>
        <begin position="185"/>
        <end position="197"/>
    </location>
</feature>
<feature type="disulfide bond" evidence="1">
    <location>
        <begin position="486"/>
        <end position="491"/>
    </location>
</feature>
<feature type="disulfide bond" evidence="1">
    <location>
        <begin position="497"/>
        <end position="551"/>
    </location>
</feature>
<feature type="disulfide bond" evidence="1">
    <location>
        <begin position="616"/>
        <end position="622"/>
    </location>
</feature>
<feature type="disulfide bond" evidence="1">
    <location>
        <begin position="695"/>
        <end position="704"/>
    </location>
</feature>
<feature type="disulfide bond" description="Interchain (between heavy and light chains)" evidence="1">
    <location>
        <begin position="848"/>
        <end position="906"/>
    </location>
</feature>
<feature type="disulfide bond" evidence="1">
    <location>
        <begin position="913"/>
        <end position="918"/>
    </location>
</feature>
<feature type="splice variant" id="VSP_041797" description="In isoform 3." evidence="9">
    <original>MGPGPCRVPRAPGWLLRALALMVAACGRVAFAFNLDTRFLVVKEAVNPGSLFGYSVALHRQTERQQRYL</original>
    <variation>MSYLQTLVWSPCSESVDLQADWREACKARLTHPPSFSS</variation>
    <location>
        <begin position="1"/>
        <end position="69"/>
    </location>
</feature>
<feature type="splice variant" id="VSP_002722" description="In isoform 2." evidence="9">
    <original>GFFKRARTRALYEAKRQKAEMKSQPSETERLTDDY</original>
    <variation>DFFKPTRYYRIMPKYHAVRIREEDRYPPPGSTLPTKKHWVTSWQIRDRYY</variation>
    <location>
        <begin position="1019"/>
        <end position="1053"/>
    </location>
</feature>
<feature type="sequence conflict" description="In Ref. 4; AAB20356/AAB20357." evidence="9" ref="4">
    <original>W</original>
    <variation>C</variation>
    <location>
        <position position="975"/>
    </location>
</feature>
<feature type="sequence conflict" description="In Ref. 4; AAB20356/AAB20357." evidence="9" ref="4">
    <original>D</original>
    <variation>N</variation>
    <location>
        <position position="979"/>
    </location>
</feature>
<feature type="sequence conflict" description="In Ref. 4; AAB20356/AAB20357." evidence="9" ref="4">
    <original>G</original>
    <variation>S</variation>
    <location>
        <position position="1002"/>
    </location>
</feature>
<sequence length="1053" mass="116745">MGPGPCRVPRAPGWLLRALALMVAACGRVAFAFNLDTRFLVVKEAVNPGSLFGYSVALHRQTERQQRYLLLAGAPRDLAVGDDYTNRTGAVYLCPLTAHKDDCERMDISEKSDPDHHIIEDMWLGVTVASQGPAGRVLVCAHRYTKVLWSGLEDQRRMVGKCYVRGNDLQLDPGDDWQTYHNEMCNSNTDYLQTGMCQLGTSGGFTQNTVYFGAPGAYNWKGNSYMIQRKDWDLSEYSYRGSEEQGNLYIGYTVQVGNAILHPTDIITVVTGAPRHQHMGAVFLLKQESGGDLQRKQVLKGTQVGAYFGSAIALADLNNDGWQDLLVGAPYYFERKEEVGGAVYVFMNQAGASFPDQPSLLLHGPSRSAFGISIASIGDINQDGFQDIAVGAPFEGLGKVYIYHSSSGGLLRQPQQIIHGEKLGLPGLATFGYSLSGKMDVDENLYPDLLVGSLSDHIVLLRARPVINILHRTLVARPAVLDPALCTATSCVQVELCFAYNQSAGNPNYRRNITLAYTLEADRDRRPPRLRFARSQSSVFHGFFSMPETHCQTLELLLMDNVRDKLRPIVIAMNYSLPLRMPDRLKLGLRSLDAYPVLNQAQAMENHTEVHFQKECGPDNKCDSNLQMRAAFLSEQLQPLSRLQYSRDTKKLFLSINVTNSPSSQRAGEDAHEALLTLEVPSALLLSSVRPSGTCQANNETILCELGNPFKRNQRMELLIAFEVIGVTLHTRDLPVLLQLSTSSHQDNLQPVLLTLQVDYTLQASLSLMNHRLQSFFGGTVMGEAAMKTAEDVGSPLKYEFQVSPVGDGLAALGTLVLGLEWPYEVTNGKWLLYPTEITIHSNGSWPCQPSGNLVNPLNLTLSDPGVTPLSPQRRRRQLDPGGDQSSPPVTLAAAKKAKSETVLTCSNGRARCVWLECPLPDTSNITNVTVKARVWNSTFIEDYKDFDRVRVDGWATLFLRTSIPTINMENKTTWFSVDIDSELVEELPAEIELWLVLVAVGAGLLLLGLIILLLWKCGFFKRARTRALYEAKRQKAEMKSQPSETERLTDDY</sequence>
<keyword id="KW-0025">Alternative splicing</keyword>
<keyword id="KW-0130">Cell adhesion</keyword>
<keyword id="KW-0965">Cell junction</keyword>
<keyword id="KW-1003">Cell membrane</keyword>
<keyword id="KW-0966">Cell projection</keyword>
<keyword id="KW-0165">Cleavage on pair of basic residues</keyword>
<keyword id="KW-1015">Disulfide bond</keyword>
<keyword id="KW-0325">Glycoprotein</keyword>
<keyword id="KW-0401">Integrin</keyword>
<keyword id="KW-0449">Lipoprotein</keyword>
<keyword id="KW-0472">Membrane</keyword>
<keyword id="KW-0564">Palmitate</keyword>
<keyword id="KW-0675">Receptor</keyword>
<keyword id="KW-1185">Reference proteome</keyword>
<keyword id="KW-0677">Repeat</keyword>
<keyword id="KW-0732">Signal</keyword>
<keyword id="KW-0812">Transmembrane</keyword>
<keyword id="KW-1133">Transmembrane helix</keyword>
<gene>
    <name type="primary">Itga3</name>
</gene>